<comment type="function">
    <text evidence="1">DNA ligase that catalyzes the formation of phosphodiester linkages between 5'-phosphoryl and 3'-hydroxyl groups in double-stranded DNA using NAD as a coenzyme and as the energy source for the reaction. It is essential for DNA replication and repair of damaged DNA.</text>
</comment>
<comment type="catalytic activity">
    <reaction evidence="1">
        <text>NAD(+) + (deoxyribonucleotide)n-3'-hydroxyl + 5'-phospho-(deoxyribonucleotide)m = (deoxyribonucleotide)n+m + AMP + beta-nicotinamide D-nucleotide.</text>
        <dbReference type="EC" id="6.5.1.2"/>
    </reaction>
</comment>
<comment type="cofactor">
    <cofactor evidence="1">
        <name>Mg(2+)</name>
        <dbReference type="ChEBI" id="CHEBI:18420"/>
    </cofactor>
    <cofactor evidence="1">
        <name>Mn(2+)</name>
        <dbReference type="ChEBI" id="CHEBI:29035"/>
    </cofactor>
</comment>
<comment type="similarity">
    <text evidence="1">Belongs to the NAD-dependent DNA ligase family. LigA subfamily.</text>
</comment>
<feature type="chain" id="PRO_0000380436" description="DNA ligase">
    <location>
        <begin position="1"/>
        <end position="699"/>
    </location>
</feature>
<feature type="domain" description="BRCT" evidence="1">
    <location>
        <begin position="620"/>
        <end position="699"/>
    </location>
</feature>
<feature type="active site" description="N6-AMP-lysine intermediate" evidence="1">
    <location>
        <position position="130"/>
    </location>
</feature>
<feature type="binding site" evidence="1">
    <location>
        <begin position="47"/>
        <end position="51"/>
    </location>
    <ligand>
        <name>NAD(+)</name>
        <dbReference type="ChEBI" id="CHEBI:57540"/>
    </ligand>
</feature>
<feature type="binding site" evidence="1">
    <location>
        <begin position="96"/>
        <end position="97"/>
    </location>
    <ligand>
        <name>NAD(+)</name>
        <dbReference type="ChEBI" id="CHEBI:57540"/>
    </ligand>
</feature>
<feature type="binding site" evidence="1">
    <location>
        <position position="128"/>
    </location>
    <ligand>
        <name>NAD(+)</name>
        <dbReference type="ChEBI" id="CHEBI:57540"/>
    </ligand>
</feature>
<feature type="binding site" evidence="1">
    <location>
        <position position="151"/>
    </location>
    <ligand>
        <name>NAD(+)</name>
        <dbReference type="ChEBI" id="CHEBI:57540"/>
    </ligand>
</feature>
<feature type="binding site" evidence="1">
    <location>
        <position position="186"/>
    </location>
    <ligand>
        <name>NAD(+)</name>
        <dbReference type="ChEBI" id="CHEBI:57540"/>
    </ligand>
</feature>
<feature type="binding site" evidence="1">
    <location>
        <position position="303"/>
    </location>
    <ligand>
        <name>NAD(+)</name>
        <dbReference type="ChEBI" id="CHEBI:57540"/>
    </ligand>
</feature>
<feature type="binding site" evidence="1">
    <location>
        <position position="327"/>
    </location>
    <ligand>
        <name>NAD(+)</name>
        <dbReference type="ChEBI" id="CHEBI:57540"/>
    </ligand>
</feature>
<feature type="binding site" evidence="1">
    <location>
        <position position="422"/>
    </location>
    <ligand>
        <name>Zn(2+)</name>
        <dbReference type="ChEBI" id="CHEBI:29105"/>
    </ligand>
</feature>
<feature type="binding site" evidence="1">
    <location>
        <position position="425"/>
    </location>
    <ligand>
        <name>Zn(2+)</name>
        <dbReference type="ChEBI" id="CHEBI:29105"/>
    </ligand>
</feature>
<feature type="binding site" evidence="1">
    <location>
        <position position="440"/>
    </location>
    <ligand>
        <name>Zn(2+)</name>
        <dbReference type="ChEBI" id="CHEBI:29105"/>
    </ligand>
</feature>
<feature type="binding site" evidence="1">
    <location>
        <position position="446"/>
    </location>
    <ligand>
        <name>Zn(2+)</name>
        <dbReference type="ChEBI" id="CHEBI:29105"/>
    </ligand>
</feature>
<keyword id="KW-0227">DNA damage</keyword>
<keyword id="KW-0234">DNA repair</keyword>
<keyword id="KW-0235">DNA replication</keyword>
<keyword id="KW-0436">Ligase</keyword>
<keyword id="KW-0460">Magnesium</keyword>
<keyword id="KW-0464">Manganese</keyword>
<keyword id="KW-0479">Metal-binding</keyword>
<keyword id="KW-0520">NAD</keyword>
<keyword id="KW-0862">Zinc</keyword>
<sequence length="699" mass="78465">MNKLDISTINIEQLTSDHAKKIVDFLALELQKYDQAYYSDNNPLVTDAQYDVLKNLNNKIVAKFPHLALVNDHSKKVGFTPSAQFSKVVHLKPMLSLANGFCVEDISNFITKIQNFLKIDHCPKIVCEYKIDGLSFNARYEYGVLTLASTRGDGQIGENITENLKTIQSFPQTLPITDKVFEVRGEIYITNNDFRVLNIQQQKLGKALFSNPRNAAAGSIRQLDPAITAQRPLKYFVYALGEVTNHHFASTQFELLQKLSQLKFSVNTDYILSDNLHSMIEFYNNVATERNNLAFEIDGVVYKVNDFALQERLGATSTSPRFAIAYKFPALIGRTKITNITLQVGKTGAVTPVAWLIPINIAGVTISRATLHNKQEIESKDIRIGDYVFLHRAGDVIPKINGVDLSARDTQSSERFIFPTTCPSCNQNLVVNEGETVARCGNSLACQAQIYERICHFVSKDALNIDGLGKQRIQFLLDNKYIVNIVDIFLLEENNKFLYSNKLEDIAGWGIKSVNKLFQNINQAKNVILDKFIYALAIKHVGKYSAKLLAKEFKTAKNFINQSLKLANNATEIYEKLRNIEGVGVKTADQLKQFFMVSANVNLITKLVNILTIQDWQYHGDNLLLSNQTIVFTGTFATVSRSEIKVQAEKLGAKVGTQVSNNTDLLVVGNKAGNKLQKAQQLGIKIINEEEWIKMVNEL</sequence>
<dbReference type="EC" id="6.5.1.2" evidence="1"/>
<dbReference type="EMBL" id="AP008981">
    <property type="protein sequence ID" value="BAG41398.1"/>
    <property type="molecule type" value="Genomic_DNA"/>
</dbReference>
<dbReference type="RefSeq" id="WP_012462317.1">
    <property type="nucleotide sequence ID" value="NC_010793.1"/>
</dbReference>
<dbReference type="SMR" id="B3CVK1"/>
<dbReference type="KEGG" id="ott:OTT_1940"/>
<dbReference type="HOGENOM" id="CLU_007764_2_1_5"/>
<dbReference type="OrthoDB" id="9759736at2"/>
<dbReference type="Proteomes" id="UP000001033">
    <property type="component" value="Chromosome"/>
</dbReference>
<dbReference type="GO" id="GO:0003677">
    <property type="term" value="F:DNA binding"/>
    <property type="evidence" value="ECO:0007669"/>
    <property type="project" value="InterPro"/>
</dbReference>
<dbReference type="GO" id="GO:0003911">
    <property type="term" value="F:DNA ligase (NAD+) activity"/>
    <property type="evidence" value="ECO:0007669"/>
    <property type="project" value="UniProtKB-UniRule"/>
</dbReference>
<dbReference type="GO" id="GO:0046872">
    <property type="term" value="F:metal ion binding"/>
    <property type="evidence" value="ECO:0007669"/>
    <property type="project" value="UniProtKB-KW"/>
</dbReference>
<dbReference type="GO" id="GO:0006281">
    <property type="term" value="P:DNA repair"/>
    <property type="evidence" value="ECO:0007669"/>
    <property type="project" value="UniProtKB-KW"/>
</dbReference>
<dbReference type="GO" id="GO:0006260">
    <property type="term" value="P:DNA replication"/>
    <property type="evidence" value="ECO:0007669"/>
    <property type="project" value="UniProtKB-KW"/>
</dbReference>
<dbReference type="CDD" id="cd17748">
    <property type="entry name" value="BRCT_DNA_ligase_like"/>
    <property type="match status" value="1"/>
</dbReference>
<dbReference type="CDD" id="cd00114">
    <property type="entry name" value="LIGANc"/>
    <property type="match status" value="1"/>
</dbReference>
<dbReference type="FunFam" id="2.40.50.140:FF:000012">
    <property type="entry name" value="DNA ligase"/>
    <property type="match status" value="1"/>
</dbReference>
<dbReference type="Gene3D" id="6.20.10.30">
    <property type="match status" value="1"/>
</dbReference>
<dbReference type="Gene3D" id="1.10.150.20">
    <property type="entry name" value="5' to 3' exonuclease, C-terminal subdomain"/>
    <property type="match status" value="2"/>
</dbReference>
<dbReference type="Gene3D" id="3.40.50.10190">
    <property type="entry name" value="BRCT domain"/>
    <property type="match status" value="1"/>
</dbReference>
<dbReference type="Gene3D" id="3.30.470.30">
    <property type="entry name" value="DNA ligase/mRNA capping enzyme"/>
    <property type="match status" value="1"/>
</dbReference>
<dbReference type="Gene3D" id="1.10.287.610">
    <property type="entry name" value="Helix hairpin bin"/>
    <property type="match status" value="1"/>
</dbReference>
<dbReference type="Gene3D" id="2.40.50.140">
    <property type="entry name" value="Nucleic acid-binding proteins"/>
    <property type="match status" value="1"/>
</dbReference>
<dbReference type="HAMAP" id="MF_01588">
    <property type="entry name" value="DNA_ligase_A"/>
    <property type="match status" value="1"/>
</dbReference>
<dbReference type="InterPro" id="IPR001357">
    <property type="entry name" value="BRCT_dom"/>
</dbReference>
<dbReference type="InterPro" id="IPR036420">
    <property type="entry name" value="BRCT_dom_sf"/>
</dbReference>
<dbReference type="InterPro" id="IPR041663">
    <property type="entry name" value="DisA/LigA_HHH"/>
</dbReference>
<dbReference type="InterPro" id="IPR001679">
    <property type="entry name" value="DNA_ligase"/>
</dbReference>
<dbReference type="InterPro" id="IPR018239">
    <property type="entry name" value="DNA_ligase_AS"/>
</dbReference>
<dbReference type="InterPro" id="IPR033136">
    <property type="entry name" value="DNA_ligase_CS"/>
</dbReference>
<dbReference type="InterPro" id="IPR013839">
    <property type="entry name" value="DNAligase_adenylation"/>
</dbReference>
<dbReference type="InterPro" id="IPR013840">
    <property type="entry name" value="DNAligase_N"/>
</dbReference>
<dbReference type="InterPro" id="IPR003583">
    <property type="entry name" value="Hlx-hairpin-Hlx_DNA-bd_motif"/>
</dbReference>
<dbReference type="InterPro" id="IPR012340">
    <property type="entry name" value="NA-bd_OB-fold"/>
</dbReference>
<dbReference type="InterPro" id="IPR004150">
    <property type="entry name" value="NAD_DNA_ligase_OB"/>
</dbReference>
<dbReference type="InterPro" id="IPR010994">
    <property type="entry name" value="RuvA_2-like"/>
</dbReference>
<dbReference type="InterPro" id="IPR004149">
    <property type="entry name" value="Znf_DNAligase_C4"/>
</dbReference>
<dbReference type="NCBIfam" id="TIGR00575">
    <property type="entry name" value="dnlj"/>
    <property type="match status" value="1"/>
</dbReference>
<dbReference type="NCBIfam" id="NF005932">
    <property type="entry name" value="PRK07956.1"/>
    <property type="match status" value="1"/>
</dbReference>
<dbReference type="Pfam" id="PF00533">
    <property type="entry name" value="BRCT"/>
    <property type="match status" value="1"/>
</dbReference>
<dbReference type="Pfam" id="PF01653">
    <property type="entry name" value="DNA_ligase_aden"/>
    <property type="match status" value="1"/>
</dbReference>
<dbReference type="Pfam" id="PF03120">
    <property type="entry name" value="DNA_ligase_OB"/>
    <property type="match status" value="1"/>
</dbReference>
<dbReference type="Pfam" id="PF03119">
    <property type="entry name" value="DNA_ligase_ZBD"/>
    <property type="match status" value="1"/>
</dbReference>
<dbReference type="Pfam" id="PF12826">
    <property type="entry name" value="HHH_2"/>
    <property type="match status" value="1"/>
</dbReference>
<dbReference type="PIRSF" id="PIRSF001604">
    <property type="entry name" value="LigA"/>
    <property type="match status" value="1"/>
</dbReference>
<dbReference type="SMART" id="SM00292">
    <property type="entry name" value="BRCT"/>
    <property type="match status" value="1"/>
</dbReference>
<dbReference type="SMART" id="SM00278">
    <property type="entry name" value="HhH1"/>
    <property type="match status" value="4"/>
</dbReference>
<dbReference type="SMART" id="SM00532">
    <property type="entry name" value="LIGANc"/>
    <property type="match status" value="1"/>
</dbReference>
<dbReference type="SUPFAM" id="SSF52113">
    <property type="entry name" value="BRCT domain"/>
    <property type="match status" value="1"/>
</dbReference>
<dbReference type="SUPFAM" id="SSF56091">
    <property type="entry name" value="DNA ligase/mRNA capping enzyme, catalytic domain"/>
    <property type="match status" value="1"/>
</dbReference>
<dbReference type="SUPFAM" id="SSF50249">
    <property type="entry name" value="Nucleic acid-binding proteins"/>
    <property type="match status" value="1"/>
</dbReference>
<dbReference type="SUPFAM" id="SSF47781">
    <property type="entry name" value="RuvA domain 2-like"/>
    <property type="match status" value="1"/>
</dbReference>
<dbReference type="PROSITE" id="PS50172">
    <property type="entry name" value="BRCT"/>
    <property type="match status" value="1"/>
</dbReference>
<dbReference type="PROSITE" id="PS01055">
    <property type="entry name" value="DNA_LIGASE_N1"/>
    <property type="match status" value="1"/>
</dbReference>
<dbReference type="PROSITE" id="PS01056">
    <property type="entry name" value="DNA_LIGASE_N2"/>
    <property type="match status" value="1"/>
</dbReference>
<name>DNLJ_ORITI</name>
<protein>
    <recommendedName>
        <fullName evidence="1">DNA ligase</fullName>
        <ecNumber evidence="1">6.5.1.2</ecNumber>
    </recommendedName>
    <alternativeName>
        <fullName evidence="1">Polydeoxyribonucleotide synthase [NAD(+)]</fullName>
    </alternativeName>
</protein>
<accession>B3CVK1</accession>
<evidence type="ECO:0000255" key="1">
    <source>
        <dbReference type="HAMAP-Rule" id="MF_01588"/>
    </source>
</evidence>
<organism>
    <name type="scientific">Orientia tsutsugamushi (strain Ikeda)</name>
    <name type="common">Rickettsia tsutsugamushi</name>
    <dbReference type="NCBI Taxonomy" id="334380"/>
    <lineage>
        <taxon>Bacteria</taxon>
        <taxon>Pseudomonadati</taxon>
        <taxon>Pseudomonadota</taxon>
        <taxon>Alphaproteobacteria</taxon>
        <taxon>Rickettsiales</taxon>
        <taxon>Rickettsiaceae</taxon>
        <taxon>Rickettsieae</taxon>
        <taxon>Orientia</taxon>
    </lineage>
</organism>
<reference key="1">
    <citation type="journal article" date="2008" name="DNA Res.">
        <title>The whole-genome sequencing of the obligate intracellular bacterium Orientia tsutsugamushi revealed massive gene amplification during reductive genome evolution.</title>
        <authorList>
            <person name="Nakayama K."/>
            <person name="Yamashita A."/>
            <person name="Kurokawa K."/>
            <person name="Morimoto T."/>
            <person name="Ogawa M."/>
            <person name="Fukuhara M."/>
            <person name="Urakami H."/>
            <person name="Ohnishi M."/>
            <person name="Uchiyama I."/>
            <person name="Ogura Y."/>
            <person name="Ooka T."/>
            <person name="Oshima K."/>
            <person name="Tamura A."/>
            <person name="Hattori M."/>
            <person name="Hayashi T."/>
        </authorList>
    </citation>
    <scope>NUCLEOTIDE SEQUENCE [LARGE SCALE GENOMIC DNA]</scope>
    <source>
        <strain>Ikeda</strain>
    </source>
</reference>
<proteinExistence type="inferred from homology"/>
<gene>
    <name evidence="1" type="primary">ligA</name>
    <name type="ordered locus">OTT_1940</name>
</gene>